<feature type="chain" id="PRO_0000299722" description="Putative uncharacterized protein YOR199W">
    <location>
        <begin position="1"/>
        <end position="109"/>
    </location>
</feature>
<feature type="transmembrane region" description="Helical" evidence="1">
    <location>
        <begin position="78"/>
        <end position="98"/>
    </location>
</feature>
<comment type="subcellular location">
    <subcellularLocation>
        <location evidence="2">Membrane</location>
        <topology evidence="2">Single-pass membrane protein</topology>
    </subcellularLocation>
</comment>
<comment type="miscellaneous">
    <text evidence="2">Partially overlaps YOR200W.</text>
</comment>
<comment type="caution">
    <text evidence="3">Product of a dubious gene prediction unlikely to encode a functional protein. Because of that it is not part of the S.cerevisiae S288c complete/reference proteome set.</text>
</comment>
<organism>
    <name type="scientific">Saccharomyces cerevisiae (strain ATCC 204508 / S288c)</name>
    <name type="common">Baker's yeast</name>
    <dbReference type="NCBI Taxonomy" id="559292"/>
    <lineage>
        <taxon>Eukaryota</taxon>
        <taxon>Fungi</taxon>
        <taxon>Dikarya</taxon>
        <taxon>Ascomycota</taxon>
        <taxon>Saccharomycotina</taxon>
        <taxon>Saccharomycetes</taxon>
        <taxon>Saccharomycetales</taxon>
        <taxon>Saccharomycetaceae</taxon>
        <taxon>Saccharomyces</taxon>
    </lineage>
</organism>
<evidence type="ECO:0000255" key="1"/>
<evidence type="ECO:0000305" key="2"/>
<evidence type="ECO:0000305" key="3">
    <source>
    </source>
</evidence>
<proteinExistence type="uncertain"/>
<protein>
    <recommendedName>
        <fullName>Putative uncharacterized protein YOR199W</fullName>
    </recommendedName>
</protein>
<name>YO199_YEAST</name>
<reference key="1">
    <citation type="journal article" date="1997" name="Nature">
        <title>The nucleotide sequence of Saccharomyces cerevisiae chromosome XV.</title>
        <authorList>
            <person name="Dujon B."/>
            <person name="Albermann K."/>
            <person name="Aldea M."/>
            <person name="Alexandraki D."/>
            <person name="Ansorge W."/>
            <person name="Arino J."/>
            <person name="Benes V."/>
            <person name="Bohn C."/>
            <person name="Bolotin-Fukuhara M."/>
            <person name="Bordonne R."/>
            <person name="Boyer J."/>
            <person name="Camasses A."/>
            <person name="Casamayor A."/>
            <person name="Casas C."/>
            <person name="Cheret G."/>
            <person name="Cziepluch C."/>
            <person name="Daignan-Fornier B."/>
            <person name="Dang V.-D."/>
            <person name="de Haan M."/>
            <person name="Delius H."/>
            <person name="Durand P."/>
            <person name="Fairhead C."/>
            <person name="Feldmann H."/>
            <person name="Gaillon L."/>
            <person name="Galisson F."/>
            <person name="Gamo F.-J."/>
            <person name="Gancedo C."/>
            <person name="Goffeau A."/>
            <person name="Goulding S.E."/>
            <person name="Grivell L.A."/>
            <person name="Habbig B."/>
            <person name="Hand N.J."/>
            <person name="Hani J."/>
            <person name="Hattenhorst U."/>
            <person name="Hebling U."/>
            <person name="Hernando Y."/>
            <person name="Herrero E."/>
            <person name="Heumann K."/>
            <person name="Hiesel R."/>
            <person name="Hilger F."/>
            <person name="Hofmann B."/>
            <person name="Hollenberg C.P."/>
            <person name="Hughes B."/>
            <person name="Jauniaux J.-C."/>
            <person name="Kalogeropoulos A."/>
            <person name="Katsoulou C."/>
            <person name="Kordes E."/>
            <person name="Lafuente M.J."/>
            <person name="Landt O."/>
            <person name="Louis E.J."/>
            <person name="Maarse A.C."/>
            <person name="Madania A."/>
            <person name="Mannhaupt G."/>
            <person name="Marck C."/>
            <person name="Martin R.P."/>
            <person name="Mewes H.-W."/>
            <person name="Michaux G."/>
            <person name="Paces V."/>
            <person name="Parle-McDermott A.G."/>
            <person name="Pearson B.M."/>
            <person name="Perrin A."/>
            <person name="Pettersson B."/>
            <person name="Poch O."/>
            <person name="Pohl T.M."/>
            <person name="Poirey R."/>
            <person name="Portetelle D."/>
            <person name="Pujol A."/>
            <person name="Purnelle B."/>
            <person name="Ramezani Rad M."/>
            <person name="Rechmann S."/>
            <person name="Schwager C."/>
            <person name="Schweizer M."/>
            <person name="Sor F."/>
            <person name="Sterky F."/>
            <person name="Tarassov I.A."/>
            <person name="Teodoru C."/>
            <person name="Tettelin H."/>
            <person name="Thierry A."/>
            <person name="Tobiasch E."/>
            <person name="Tzermia M."/>
            <person name="Uhlen M."/>
            <person name="Unseld M."/>
            <person name="Valens M."/>
            <person name="Vandenbol M."/>
            <person name="Vetter I."/>
            <person name="Vlcek C."/>
            <person name="Voet M."/>
            <person name="Volckaert G."/>
            <person name="Voss H."/>
            <person name="Wambutt R."/>
            <person name="Wedler H."/>
            <person name="Wiemann S."/>
            <person name="Winsor B."/>
            <person name="Wolfe K.H."/>
            <person name="Zollner A."/>
            <person name="Zumstein E."/>
            <person name="Kleine K."/>
        </authorList>
    </citation>
    <scope>NUCLEOTIDE SEQUENCE [LARGE SCALE GENOMIC DNA]</scope>
    <source>
        <strain>ATCC 204508 / S288c</strain>
    </source>
</reference>
<reference key="2">
    <citation type="journal article" date="2014" name="G3 (Bethesda)">
        <title>The reference genome sequence of Saccharomyces cerevisiae: Then and now.</title>
        <authorList>
            <person name="Engel S.R."/>
            <person name="Dietrich F.S."/>
            <person name="Fisk D.G."/>
            <person name="Binkley G."/>
            <person name="Balakrishnan R."/>
            <person name="Costanzo M.C."/>
            <person name="Dwight S.S."/>
            <person name="Hitz B.C."/>
            <person name="Karra K."/>
            <person name="Nash R.S."/>
            <person name="Weng S."/>
            <person name="Wong E.D."/>
            <person name="Lloyd P."/>
            <person name="Skrzypek M.S."/>
            <person name="Miyasato S.R."/>
            <person name="Simison M."/>
            <person name="Cherry J.M."/>
        </authorList>
    </citation>
    <scope>GENOME REANNOTATION</scope>
    <source>
        <strain>ATCC 204508 / S288c</strain>
    </source>
</reference>
<gene>
    <name type="ordered locus">YOR199W</name>
    <name type="ORF">O4821</name>
</gene>
<keyword id="KW-0472">Membrane</keyword>
<keyword id="KW-0812">Transmembrane</keyword>
<keyword id="KW-1133">Transmembrane helix</keyword>
<accession>Q08604</accession>
<dbReference type="EMBL" id="Z75107">
    <property type="protein sequence ID" value="CAA99412.1"/>
    <property type="molecule type" value="Genomic_DNA"/>
</dbReference>
<dbReference type="PIR" id="S67091">
    <property type="entry name" value="S67091"/>
</dbReference>
<dbReference type="IntAct" id="Q08604">
    <property type="interactions" value="16"/>
</dbReference>
<dbReference type="PaxDb" id="4932-YOR199W"/>
<dbReference type="EnsemblFungi" id="YOR199W_mRNA">
    <property type="protein sequence ID" value="YOR199W"/>
    <property type="gene ID" value="YOR199W"/>
</dbReference>
<dbReference type="AGR" id="SGD:S000005725"/>
<dbReference type="SGD" id="S000005725">
    <property type="gene designation" value="YOR199W"/>
</dbReference>
<dbReference type="HOGENOM" id="CLU_2186034_0_0_1"/>
<dbReference type="ChiTaRS" id="YOR199W">
    <property type="organism name" value="yeast"/>
</dbReference>
<dbReference type="GO" id="GO:0016020">
    <property type="term" value="C:membrane"/>
    <property type="evidence" value="ECO:0007669"/>
    <property type="project" value="UniProtKB-SubCell"/>
</dbReference>
<sequence>MEMEGQNEKKKKDEPKIENRLRRTLMLCITQPSNFRNSIWLINVRDKMRITCSTSSRSVIFFHRHSAGKQFFAYHHHYTCIMYIGLLCMFVLLYMTVIYKLEYYLLTMQ</sequence>